<sequence>MSEIADKVKKIVVEHLGVEESKVTPEASFIDDLGADSLDTVELVMAFEEAFSVEIPEDAAEKIATVKDAIDYIEKQKAA</sequence>
<name>ACP_GLUDA</name>
<comment type="function">
    <text evidence="1">Carrier of the growing fatty acid chain in fatty acid biosynthesis.</text>
</comment>
<comment type="pathway">
    <text evidence="1">Lipid metabolism; fatty acid biosynthesis.</text>
</comment>
<comment type="subcellular location">
    <subcellularLocation>
        <location evidence="1">Cytoplasm</location>
    </subcellularLocation>
</comment>
<comment type="PTM">
    <text evidence="1">4'-phosphopantetheine is transferred from CoA to a specific serine of apo-ACP by AcpS. This modification is essential for activity because fatty acids are bound in thioester linkage to the sulfhydryl of the prosthetic group.</text>
</comment>
<comment type="similarity">
    <text evidence="1">Belongs to the acyl carrier protein (ACP) family.</text>
</comment>
<accession>A9HRD8</accession>
<accession>B5ZM33</accession>
<protein>
    <recommendedName>
        <fullName evidence="1">Acyl carrier protein</fullName>
        <shortName evidence="1">ACP</shortName>
    </recommendedName>
</protein>
<organism>
    <name type="scientific">Gluconacetobacter diazotrophicus (strain ATCC 49037 / DSM 5601 / CCUG 37298 / CIP 103539 / LMG 7603 / PAl5)</name>
    <dbReference type="NCBI Taxonomy" id="272568"/>
    <lineage>
        <taxon>Bacteria</taxon>
        <taxon>Pseudomonadati</taxon>
        <taxon>Pseudomonadota</taxon>
        <taxon>Alphaproteobacteria</taxon>
        <taxon>Acetobacterales</taxon>
        <taxon>Acetobacteraceae</taxon>
        <taxon>Gluconacetobacter</taxon>
    </lineage>
</organism>
<feature type="chain" id="PRO_1000085603" description="Acyl carrier protein">
    <location>
        <begin position="1"/>
        <end position="79"/>
    </location>
</feature>
<feature type="domain" description="Carrier" evidence="2">
    <location>
        <begin position="2"/>
        <end position="77"/>
    </location>
</feature>
<feature type="modified residue" description="O-(pantetheine 4'-phosphoryl)serine" evidence="2">
    <location>
        <position position="37"/>
    </location>
</feature>
<dbReference type="EMBL" id="AM889285">
    <property type="protein sequence ID" value="CAP56885.1"/>
    <property type="molecule type" value="Genomic_DNA"/>
</dbReference>
<dbReference type="EMBL" id="CP001189">
    <property type="protein sequence ID" value="ACI53133.1"/>
    <property type="molecule type" value="Genomic_DNA"/>
</dbReference>
<dbReference type="RefSeq" id="WP_012227163.1">
    <property type="nucleotide sequence ID" value="NC_011365.1"/>
</dbReference>
<dbReference type="SMR" id="A9HRD8"/>
<dbReference type="STRING" id="272568.GDI2942"/>
<dbReference type="KEGG" id="gdi:GDI2942"/>
<dbReference type="KEGG" id="gdj:Gdia_3407"/>
<dbReference type="eggNOG" id="COG0236">
    <property type="taxonomic scope" value="Bacteria"/>
</dbReference>
<dbReference type="HOGENOM" id="CLU_108696_5_1_5"/>
<dbReference type="OrthoDB" id="9804551at2"/>
<dbReference type="UniPathway" id="UPA00094"/>
<dbReference type="Proteomes" id="UP000001176">
    <property type="component" value="Chromosome"/>
</dbReference>
<dbReference type="GO" id="GO:0005829">
    <property type="term" value="C:cytosol"/>
    <property type="evidence" value="ECO:0007669"/>
    <property type="project" value="TreeGrafter"/>
</dbReference>
<dbReference type="GO" id="GO:0016020">
    <property type="term" value="C:membrane"/>
    <property type="evidence" value="ECO:0007669"/>
    <property type="project" value="GOC"/>
</dbReference>
<dbReference type="GO" id="GO:0000035">
    <property type="term" value="F:acyl binding"/>
    <property type="evidence" value="ECO:0007669"/>
    <property type="project" value="TreeGrafter"/>
</dbReference>
<dbReference type="GO" id="GO:0000036">
    <property type="term" value="F:acyl carrier activity"/>
    <property type="evidence" value="ECO:0007669"/>
    <property type="project" value="UniProtKB-UniRule"/>
</dbReference>
<dbReference type="GO" id="GO:0009245">
    <property type="term" value="P:lipid A biosynthetic process"/>
    <property type="evidence" value="ECO:0007669"/>
    <property type="project" value="TreeGrafter"/>
</dbReference>
<dbReference type="FunFam" id="1.10.1200.10:FF:000001">
    <property type="entry name" value="Acyl carrier protein"/>
    <property type="match status" value="1"/>
</dbReference>
<dbReference type="Gene3D" id="1.10.1200.10">
    <property type="entry name" value="ACP-like"/>
    <property type="match status" value="1"/>
</dbReference>
<dbReference type="HAMAP" id="MF_01217">
    <property type="entry name" value="Acyl_carrier"/>
    <property type="match status" value="1"/>
</dbReference>
<dbReference type="InterPro" id="IPR003231">
    <property type="entry name" value="ACP"/>
</dbReference>
<dbReference type="InterPro" id="IPR036736">
    <property type="entry name" value="ACP-like_sf"/>
</dbReference>
<dbReference type="InterPro" id="IPR009081">
    <property type="entry name" value="PP-bd_ACP"/>
</dbReference>
<dbReference type="InterPro" id="IPR006162">
    <property type="entry name" value="Ppantetheine_attach_site"/>
</dbReference>
<dbReference type="NCBIfam" id="TIGR00517">
    <property type="entry name" value="acyl_carrier"/>
    <property type="match status" value="1"/>
</dbReference>
<dbReference type="NCBIfam" id="NF002148">
    <property type="entry name" value="PRK00982.1-2"/>
    <property type="match status" value="1"/>
</dbReference>
<dbReference type="NCBIfam" id="NF002149">
    <property type="entry name" value="PRK00982.1-3"/>
    <property type="match status" value="1"/>
</dbReference>
<dbReference type="NCBIfam" id="NF002150">
    <property type="entry name" value="PRK00982.1-4"/>
    <property type="match status" value="1"/>
</dbReference>
<dbReference type="NCBIfam" id="NF002151">
    <property type="entry name" value="PRK00982.1-5"/>
    <property type="match status" value="1"/>
</dbReference>
<dbReference type="PANTHER" id="PTHR20863">
    <property type="entry name" value="ACYL CARRIER PROTEIN"/>
    <property type="match status" value="1"/>
</dbReference>
<dbReference type="PANTHER" id="PTHR20863:SF76">
    <property type="entry name" value="CARRIER DOMAIN-CONTAINING PROTEIN"/>
    <property type="match status" value="1"/>
</dbReference>
<dbReference type="Pfam" id="PF00550">
    <property type="entry name" value="PP-binding"/>
    <property type="match status" value="1"/>
</dbReference>
<dbReference type="SUPFAM" id="SSF47336">
    <property type="entry name" value="ACP-like"/>
    <property type="match status" value="1"/>
</dbReference>
<dbReference type="PROSITE" id="PS50075">
    <property type="entry name" value="CARRIER"/>
    <property type="match status" value="1"/>
</dbReference>
<dbReference type="PROSITE" id="PS00012">
    <property type="entry name" value="PHOSPHOPANTETHEINE"/>
    <property type="match status" value="1"/>
</dbReference>
<reference key="1">
    <citation type="journal article" date="2009" name="BMC Genomics">
        <title>Complete genome sequence of the sugarcane nitrogen-fixing endophyte Gluconacetobacter diazotrophicus Pal5.</title>
        <authorList>
            <person name="Bertalan M."/>
            <person name="Albano R."/>
            <person name="de Padua V."/>
            <person name="Rouws L."/>
            <person name="Rojas C."/>
            <person name="Hemerly A."/>
            <person name="Teixeira K."/>
            <person name="Schwab S."/>
            <person name="Araujo J."/>
            <person name="Oliveira A."/>
            <person name="Franca L."/>
            <person name="Magalhaes V."/>
            <person name="Alqueres S."/>
            <person name="Cardoso A."/>
            <person name="Almeida W."/>
            <person name="Loureiro M.M."/>
            <person name="Nogueira E."/>
            <person name="Cidade D."/>
            <person name="Oliveira D."/>
            <person name="Simao T."/>
            <person name="Macedo J."/>
            <person name="Valadao A."/>
            <person name="Dreschsel M."/>
            <person name="Freitas F."/>
            <person name="Vidal M."/>
            <person name="Guedes H."/>
            <person name="Rodrigues E."/>
            <person name="Meneses C."/>
            <person name="Brioso P."/>
            <person name="Pozzer L."/>
            <person name="Figueiredo D."/>
            <person name="Montano H."/>
            <person name="Junior J."/>
            <person name="de Souza Filho G."/>
            <person name="Martin Quintana Flores V."/>
            <person name="Ferreira B."/>
            <person name="Branco A."/>
            <person name="Gonzalez P."/>
            <person name="Guillobel H."/>
            <person name="Lemos M."/>
            <person name="Seibel L."/>
            <person name="Macedo J."/>
            <person name="Alves-Ferreira M."/>
            <person name="Sachetto-Martins G."/>
            <person name="Coelho A."/>
            <person name="Santos E."/>
            <person name="Amaral G."/>
            <person name="Neves A."/>
            <person name="Pacheco A.B."/>
            <person name="Carvalho D."/>
            <person name="Lery L."/>
            <person name="Bisch P."/>
            <person name="Rossle S.C."/>
            <person name="Urmenyi T."/>
            <person name="Rael Pereira A."/>
            <person name="Silva R."/>
            <person name="Rondinelli E."/>
            <person name="von Kruger W."/>
            <person name="Martins O."/>
            <person name="Baldani J.I."/>
            <person name="Ferreira P.C."/>
        </authorList>
    </citation>
    <scope>NUCLEOTIDE SEQUENCE [LARGE SCALE GENOMIC DNA]</scope>
    <source>
        <strain>ATCC 49037 / DSM 5601 / CCUG 37298 / CIP 103539 / LMG 7603 / PAl5</strain>
    </source>
</reference>
<reference key="2">
    <citation type="journal article" date="2010" name="Stand. Genomic Sci.">
        <title>Two genome sequences of the same bacterial strain, Gluconacetobacter diazotrophicus PAl 5, suggest a new standard in genome sequence submission.</title>
        <authorList>
            <person name="Giongo A."/>
            <person name="Tyler H.L."/>
            <person name="Zipperer U.N."/>
            <person name="Triplett E.W."/>
        </authorList>
    </citation>
    <scope>NUCLEOTIDE SEQUENCE [LARGE SCALE GENOMIC DNA]</scope>
    <source>
        <strain>ATCC 49037 / DSM 5601 / CCUG 37298 / CIP 103539 / LMG 7603 / PAl5</strain>
    </source>
</reference>
<keyword id="KW-0963">Cytoplasm</keyword>
<keyword id="KW-0275">Fatty acid biosynthesis</keyword>
<keyword id="KW-0276">Fatty acid metabolism</keyword>
<keyword id="KW-0444">Lipid biosynthesis</keyword>
<keyword id="KW-0443">Lipid metabolism</keyword>
<keyword id="KW-0596">Phosphopantetheine</keyword>
<keyword id="KW-0597">Phosphoprotein</keyword>
<keyword id="KW-1185">Reference proteome</keyword>
<evidence type="ECO:0000255" key="1">
    <source>
        <dbReference type="HAMAP-Rule" id="MF_01217"/>
    </source>
</evidence>
<evidence type="ECO:0000255" key="2">
    <source>
        <dbReference type="PROSITE-ProRule" id="PRU00258"/>
    </source>
</evidence>
<proteinExistence type="inferred from homology"/>
<gene>
    <name evidence="1" type="primary">acpP</name>
    <name type="ordered locus">GDI2942</name>
    <name type="ordered locus">Gdia_3407</name>
</gene>